<comment type="function">
    <text evidence="2">One of the essential components for the initiation of protein synthesis. Protects formylmethionyl-tRNA from spontaneous hydrolysis and promotes its binding to the 30S ribosomal subunits. Also involved in the hydrolysis of GTP during the formation of the 70S ribosomal complex.</text>
</comment>
<comment type="subcellular location">
    <subcellularLocation>
        <location evidence="2">Cytoplasm</location>
    </subcellularLocation>
</comment>
<comment type="similarity">
    <text evidence="2">Belongs to the TRAFAC class translation factor GTPase superfamily. Classic translation factor GTPase family. IF-2 subfamily.</text>
</comment>
<name>IF2_BRASB</name>
<keyword id="KW-0963">Cytoplasm</keyword>
<keyword id="KW-0342">GTP-binding</keyword>
<keyword id="KW-0396">Initiation factor</keyword>
<keyword id="KW-0547">Nucleotide-binding</keyword>
<keyword id="KW-0648">Protein biosynthesis</keyword>
<keyword id="KW-1185">Reference proteome</keyword>
<protein>
    <recommendedName>
        <fullName evidence="2">Translation initiation factor IF-2</fullName>
    </recommendedName>
</protein>
<evidence type="ECO:0000250" key="1"/>
<evidence type="ECO:0000255" key="2">
    <source>
        <dbReference type="HAMAP-Rule" id="MF_00100"/>
    </source>
</evidence>
<evidence type="ECO:0000256" key="3">
    <source>
        <dbReference type="SAM" id="MobiDB-lite"/>
    </source>
</evidence>
<organism>
    <name type="scientific">Bradyrhizobium sp. (strain BTAi1 / ATCC BAA-1182)</name>
    <dbReference type="NCBI Taxonomy" id="288000"/>
    <lineage>
        <taxon>Bacteria</taxon>
        <taxon>Pseudomonadati</taxon>
        <taxon>Pseudomonadota</taxon>
        <taxon>Alphaproteobacteria</taxon>
        <taxon>Hyphomicrobiales</taxon>
        <taxon>Nitrobacteraceae</taxon>
        <taxon>Bradyrhizobium</taxon>
    </lineage>
</organism>
<accession>A5E866</accession>
<feature type="chain" id="PRO_1000008206" description="Translation initiation factor IF-2">
    <location>
        <begin position="1"/>
        <end position="921"/>
    </location>
</feature>
<feature type="domain" description="tr-type G">
    <location>
        <begin position="417"/>
        <end position="586"/>
    </location>
</feature>
<feature type="region of interest" description="Disordered" evidence="3">
    <location>
        <begin position="1"/>
        <end position="296"/>
    </location>
</feature>
<feature type="region of interest" description="G1" evidence="1">
    <location>
        <begin position="426"/>
        <end position="433"/>
    </location>
</feature>
<feature type="region of interest" description="G2" evidence="1">
    <location>
        <begin position="451"/>
        <end position="455"/>
    </location>
</feature>
<feature type="region of interest" description="G3" evidence="1">
    <location>
        <begin position="474"/>
        <end position="477"/>
    </location>
</feature>
<feature type="region of interest" description="G4" evidence="1">
    <location>
        <begin position="528"/>
        <end position="531"/>
    </location>
</feature>
<feature type="region of interest" description="G5" evidence="1">
    <location>
        <begin position="564"/>
        <end position="566"/>
    </location>
</feature>
<feature type="compositionally biased region" description="Low complexity" evidence="3">
    <location>
        <begin position="80"/>
        <end position="89"/>
    </location>
</feature>
<feature type="compositionally biased region" description="Basic and acidic residues" evidence="3">
    <location>
        <begin position="116"/>
        <end position="182"/>
    </location>
</feature>
<feature type="compositionally biased region" description="Low complexity" evidence="3">
    <location>
        <begin position="183"/>
        <end position="257"/>
    </location>
</feature>
<feature type="binding site" evidence="2">
    <location>
        <begin position="426"/>
        <end position="433"/>
    </location>
    <ligand>
        <name>GTP</name>
        <dbReference type="ChEBI" id="CHEBI:37565"/>
    </ligand>
</feature>
<feature type="binding site" evidence="2">
    <location>
        <begin position="474"/>
        <end position="478"/>
    </location>
    <ligand>
        <name>GTP</name>
        <dbReference type="ChEBI" id="CHEBI:37565"/>
    </ligand>
</feature>
<feature type="binding site" evidence="2">
    <location>
        <begin position="528"/>
        <end position="531"/>
    </location>
    <ligand>
        <name>GTP</name>
        <dbReference type="ChEBI" id="CHEBI:37565"/>
    </ligand>
</feature>
<reference key="1">
    <citation type="journal article" date="2007" name="Science">
        <title>Legumes symbioses: absence of nod genes in photosynthetic bradyrhizobia.</title>
        <authorList>
            <person name="Giraud E."/>
            <person name="Moulin L."/>
            <person name="Vallenet D."/>
            <person name="Barbe V."/>
            <person name="Cytryn E."/>
            <person name="Avarre J.-C."/>
            <person name="Jaubert M."/>
            <person name="Simon D."/>
            <person name="Cartieaux F."/>
            <person name="Prin Y."/>
            <person name="Bena G."/>
            <person name="Hannibal L."/>
            <person name="Fardoux J."/>
            <person name="Kojadinovic M."/>
            <person name="Vuillet L."/>
            <person name="Lajus A."/>
            <person name="Cruveiller S."/>
            <person name="Rouy Z."/>
            <person name="Mangenot S."/>
            <person name="Segurens B."/>
            <person name="Dossat C."/>
            <person name="Franck W.L."/>
            <person name="Chang W.-S."/>
            <person name="Saunders E."/>
            <person name="Bruce D."/>
            <person name="Richardson P."/>
            <person name="Normand P."/>
            <person name="Dreyfus B."/>
            <person name="Pignol D."/>
            <person name="Stacey G."/>
            <person name="Emerich D."/>
            <person name="Vermeglio A."/>
            <person name="Medigue C."/>
            <person name="Sadowsky M."/>
        </authorList>
    </citation>
    <scope>NUCLEOTIDE SEQUENCE [LARGE SCALE GENOMIC DNA]</scope>
    <source>
        <strain>BTAi1 / ATCC BAA-1182</strain>
    </source>
</reference>
<sequence length="921" mass="98697">MADNNTPGDKKLSVPTKTLTLKPRVETGTVRQSFPHGRSKQVVVEKRGTKRRVGDGAPDAPHAPEPVVAKAPPPPPPSNRPSGPRPGSSQRGGSGVVLRTLTEDERSARASALADARVRDMEERRQAEEEARRRAEREAAERAEREAAEARRKAEEERHRQEEEAKRKAELEAKKRFGEGEAPRPATAAPQQQPAAVTAPARPAQAPGRPQGAPGSRPQQIGTSARPGGAQPAGARPAAARPAGAGPLGRAPGVAAGPEDDEGPRQIRRGPGGAARPAPPPKTTHKPGPQKQRGRLTVVTALTADDVRERSIASFRRRTQRLKGHAANEQKEKLVREVTIPEAITIQELANRMSERAVDVIRLLMRQGAMHKITDVIDADTAQLIAEELGHSVKRVAASDVEEGLFDVVDDSTDTEPRSPVVTVMGHVDHGKTSLLDALRHANVVSGEAGGITQHIGAYQVTAPDSGKKITFIDTPGHAAFTAMRARGAKVTDIVVLVVAADDGVMPQTIEAINHAKAAKVPMIVAINKIDKPDARPDRVRTELLQHEVQVESLGGEVVDVEVSAKNKTNLDRLLEMIALQADILDLKTNSDRPAEGTVIEAKLDRGRGPVATVLVQRGTLRVGDIIVAGAEMGRVRALISDQGETLQEAGPSVPVEVLGFNGPPEAGDRLAVVENEARARQVTSYRAHQKRENAAASISGMRGSLEQMMSQLKTAGRKEFPLVIKADVQGSLEAILGSLEKLGTDEVAARILHAGVGGISESDVTLAEGFNAAIIGFSVRANKEAAALAKRNGIEIRYYNIIYDLVDDVKKAMSGLLAPTLRETMLGNAQILEVFNISKVGKVAGCRVTDGTVERGANVRLIRDNVVVHEGKLSTLKRFKDEVKEVQAGQECGMAFESYGDMRVGDVIECYRVETIQRSL</sequence>
<gene>
    <name evidence="2" type="primary">infB</name>
    <name type="ordered locus">BBta_0057</name>
</gene>
<dbReference type="EMBL" id="CP000494">
    <property type="protein sequence ID" value="ABQ32360.1"/>
    <property type="molecule type" value="Genomic_DNA"/>
</dbReference>
<dbReference type="RefSeq" id="WP_011942584.1">
    <property type="nucleotide sequence ID" value="NC_009485.1"/>
</dbReference>
<dbReference type="SMR" id="A5E866"/>
<dbReference type="STRING" id="288000.BBta_0057"/>
<dbReference type="KEGG" id="bbt:BBta_0057"/>
<dbReference type="eggNOG" id="COG0532">
    <property type="taxonomic scope" value="Bacteria"/>
</dbReference>
<dbReference type="HOGENOM" id="CLU_006301_10_0_5"/>
<dbReference type="OrthoDB" id="9811804at2"/>
<dbReference type="Proteomes" id="UP000000246">
    <property type="component" value="Chromosome"/>
</dbReference>
<dbReference type="GO" id="GO:0005829">
    <property type="term" value="C:cytosol"/>
    <property type="evidence" value="ECO:0007669"/>
    <property type="project" value="TreeGrafter"/>
</dbReference>
<dbReference type="GO" id="GO:0005525">
    <property type="term" value="F:GTP binding"/>
    <property type="evidence" value="ECO:0007669"/>
    <property type="project" value="UniProtKB-KW"/>
</dbReference>
<dbReference type="GO" id="GO:0003924">
    <property type="term" value="F:GTPase activity"/>
    <property type="evidence" value="ECO:0007669"/>
    <property type="project" value="UniProtKB-UniRule"/>
</dbReference>
<dbReference type="GO" id="GO:0097216">
    <property type="term" value="F:guanosine tetraphosphate binding"/>
    <property type="evidence" value="ECO:0007669"/>
    <property type="project" value="UniProtKB-ARBA"/>
</dbReference>
<dbReference type="GO" id="GO:0003743">
    <property type="term" value="F:translation initiation factor activity"/>
    <property type="evidence" value="ECO:0007669"/>
    <property type="project" value="UniProtKB-UniRule"/>
</dbReference>
<dbReference type="CDD" id="cd01887">
    <property type="entry name" value="IF2_eIF5B"/>
    <property type="match status" value="1"/>
</dbReference>
<dbReference type="CDD" id="cd03702">
    <property type="entry name" value="IF2_mtIF2_II"/>
    <property type="match status" value="1"/>
</dbReference>
<dbReference type="CDD" id="cd03692">
    <property type="entry name" value="mtIF2_IVc"/>
    <property type="match status" value="1"/>
</dbReference>
<dbReference type="FunFam" id="2.40.30.10:FF:000007">
    <property type="entry name" value="Translation initiation factor IF-2"/>
    <property type="match status" value="1"/>
</dbReference>
<dbReference type="FunFam" id="2.40.30.10:FF:000008">
    <property type="entry name" value="Translation initiation factor IF-2"/>
    <property type="match status" value="1"/>
</dbReference>
<dbReference type="FunFam" id="3.40.50.10050:FF:000001">
    <property type="entry name" value="Translation initiation factor IF-2"/>
    <property type="match status" value="1"/>
</dbReference>
<dbReference type="FunFam" id="3.40.50.300:FF:000019">
    <property type="entry name" value="Translation initiation factor IF-2"/>
    <property type="match status" value="1"/>
</dbReference>
<dbReference type="Gene3D" id="3.40.50.300">
    <property type="entry name" value="P-loop containing nucleotide triphosphate hydrolases"/>
    <property type="match status" value="1"/>
</dbReference>
<dbReference type="Gene3D" id="2.40.30.10">
    <property type="entry name" value="Translation factors"/>
    <property type="match status" value="2"/>
</dbReference>
<dbReference type="Gene3D" id="3.40.50.10050">
    <property type="entry name" value="Translation initiation factor IF- 2, domain 3"/>
    <property type="match status" value="1"/>
</dbReference>
<dbReference type="HAMAP" id="MF_00100_B">
    <property type="entry name" value="IF_2_B"/>
    <property type="match status" value="1"/>
</dbReference>
<dbReference type="InterPro" id="IPR053905">
    <property type="entry name" value="EF-G-like_DII"/>
</dbReference>
<dbReference type="InterPro" id="IPR004161">
    <property type="entry name" value="EFTu-like_2"/>
</dbReference>
<dbReference type="InterPro" id="IPR013575">
    <property type="entry name" value="IF2_assoc_dom_bac"/>
</dbReference>
<dbReference type="InterPro" id="IPR044145">
    <property type="entry name" value="IF2_II"/>
</dbReference>
<dbReference type="InterPro" id="IPR006847">
    <property type="entry name" value="IF2_N"/>
</dbReference>
<dbReference type="InterPro" id="IPR027417">
    <property type="entry name" value="P-loop_NTPase"/>
</dbReference>
<dbReference type="InterPro" id="IPR005225">
    <property type="entry name" value="Small_GTP-bd"/>
</dbReference>
<dbReference type="InterPro" id="IPR000795">
    <property type="entry name" value="T_Tr_GTP-bd_dom"/>
</dbReference>
<dbReference type="InterPro" id="IPR000178">
    <property type="entry name" value="TF_IF2_bacterial-like"/>
</dbReference>
<dbReference type="InterPro" id="IPR015760">
    <property type="entry name" value="TIF_IF2"/>
</dbReference>
<dbReference type="InterPro" id="IPR023115">
    <property type="entry name" value="TIF_IF2_dom3"/>
</dbReference>
<dbReference type="InterPro" id="IPR036925">
    <property type="entry name" value="TIF_IF2_dom3_sf"/>
</dbReference>
<dbReference type="InterPro" id="IPR009000">
    <property type="entry name" value="Transl_B-barrel_sf"/>
</dbReference>
<dbReference type="NCBIfam" id="TIGR00487">
    <property type="entry name" value="IF-2"/>
    <property type="match status" value="1"/>
</dbReference>
<dbReference type="NCBIfam" id="TIGR00231">
    <property type="entry name" value="small_GTP"/>
    <property type="match status" value="1"/>
</dbReference>
<dbReference type="PANTHER" id="PTHR43381:SF5">
    <property type="entry name" value="TR-TYPE G DOMAIN-CONTAINING PROTEIN"/>
    <property type="match status" value="1"/>
</dbReference>
<dbReference type="PANTHER" id="PTHR43381">
    <property type="entry name" value="TRANSLATION INITIATION FACTOR IF-2-RELATED"/>
    <property type="match status" value="1"/>
</dbReference>
<dbReference type="Pfam" id="PF22042">
    <property type="entry name" value="EF-G_D2"/>
    <property type="match status" value="1"/>
</dbReference>
<dbReference type="Pfam" id="PF00009">
    <property type="entry name" value="GTP_EFTU"/>
    <property type="match status" value="1"/>
</dbReference>
<dbReference type="Pfam" id="PF03144">
    <property type="entry name" value="GTP_EFTU_D2"/>
    <property type="match status" value="1"/>
</dbReference>
<dbReference type="Pfam" id="PF11987">
    <property type="entry name" value="IF-2"/>
    <property type="match status" value="1"/>
</dbReference>
<dbReference type="Pfam" id="PF08364">
    <property type="entry name" value="IF2_assoc"/>
    <property type="match status" value="1"/>
</dbReference>
<dbReference type="Pfam" id="PF04760">
    <property type="entry name" value="IF2_N"/>
    <property type="match status" value="1"/>
</dbReference>
<dbReference type="SUPFAM" id="SSF52156">
    <property type="entry name" value="Initiation factor IF2/eIF5b, domain 3"/>
    <property type="match status" value="1"/>
</dbReference>
<dbReference type="SUPFAM" id="SSF52540">
    <property type="entry name" value="P-loop containing nucleoside triphosphate hydrolases"/>
    <property type="match status" value="1"/>
</dbReference>
<dbReference type="SUPFAM" id="SSF50447">
    <property type="entry name" value="Translation proteins"/>
    <property type="match status" value="2"/>
</dbReference>
<dbReference type="PROSITE" id="PS51722">
    <property type="entry name" value="G_TR_2"/>
    <property type="match status" value="1"/>
</dbReference>
<dbReference type="PROSITE" id="PS01176">
    <property type="entry name" value="IF2"/>
    <property type="match status" value="1"/>
</dbReference>
<proteinExistence type="inferred from homology"/>